<evidence type="ECO:0000255" key="1">
    <source>
        <dbReference type="HAMAP-Rule" id="MF_00588"/>
    </source>
</evidence>
<reference key="1">
    <citation type="journal article" date="2007" name="Genome Biol.">
        <title>Genome analysis and genome-wide proteomics of Thermococcus gammatolerans, the most radioresistant organism known amongst the Archaea.</title>
        <authorList>
            <person name="Zivanovic Y."/>
            <person name="Armengaud J."/>
            <person name="Lagorce A."/>
            <person name="Leplat C."/>
            <person name="Guerin P."/>
            <person name="Dutertre M."/>
            <person name="Anthouard V."/>
            <person name="Forterre P."/>
            <person name="Wincker P."/>
            <person name="Confalonieri F."/>
        </authorList>
    </citation>
    <scope>NUCLEOTIDE SEQUENCE [LARGE SCALE GENOMIC DNA]</scope>
    <source>
        <strain>DSM 15229 / JCM 11827 / EJ3</strain>
    </source>
</reference>
<proteinExistence type="inferred from homology"/>
<feature type="chain" id="PRO_1000212162" description="Glutamyl-tRNA(Gln) amidotransferase subunit E">
    <location>
        <begin position="1"/>
        <end position="628"/>
    </location>
</feature>
<name>GATE_THEGJ</name>
<gene>
    <name evidence="1" type="primary">gatE</name>
    <name type="ordered locus">TGAM_0920</name>
</gene>
<keyword id="KW-0067">ATP-binding</keyword>
<keyword id="KW-0436">Ligase</keyword>
<keyword id="KW-0547">Nucleotide-binding</keyword>
<keyword id="KW-0648">Protein biosynthesis</keyword>
<keyword id="KW-1185">Reference proteome</keyword>
<protein>
    <recommendedName>
        <fullName evidence="1">Glutamyl-tRNA(Gln) amidotransferase subunit E</fullName>
        <shortName evidence="1">Glu-ADT subunit E</shortName>
        <ecNumber evidence="1">6.3.5.-</ecNumber>
    </recommendedName>
</protein>
<dbReference type="EC" id="6.3.5.-" evidence="1"/>
<dbReference type="EMBL" id="CP001398">
    <property type="protein sequence ID" value="ACS33422.1"/>
    <property type="molecule type" value="Genomic_DNA"/>
</dbReference>
<dbReference type="RefSeq" id="WP_015858536.1">
    <property type="nucleotide sequence ID" value="NC_012804.1"/>
</dbReference>
<dbReference type="SMR" id="C5A5B0"/>
<dbReference type="STRING" id="593117.TGAM_0920"/>
<dbReference type="PaxDb" id="593117-TGAM_0920"/>
<dbReference type="GeneID" id="7986877"/>
<dbReference type="KEGG" id="tga:TGAM_0920"/>
<dbReference type="PATRIC" id="fig|593117.10.peg.913"/>
<dbReference type="eggNOG" id="arCOG01719">
    <property type="taxonomic scope" value="Archaea"/>
</dbReference>
<dbReference type="HOGENOM" id="CLU_030702_0_0_2"/>
<dbReference type="OrthoDB" id="7316at2157"/>
<dbReference type="Proteomes" id="UP000001488">
    <property type="component" value="Chromosome"/>
</dbReference>
<dbReference type="GO" id="GO:0005737">
    <property type="term" value="C:cytoplasm"/>
    <property type="evidence" value="ECO:0007669"/>
    <property type="project" value="InterPro"/>
</dbReference>
<dbReference type="GO" id="GO:0004812">
    <property type="term" value="F:aminoacyl-tRNA ligase activity"/>
    <property type="evidence" value="ECO:0007669"/>
    <property type="project" value="InterPro"/>
</dbReference>
<dbReference type="GO" id="GO:0005524">
    <property type="term" value="F:ATP binding"/>
    <property type="evidence" value="ECO:0007669"/>
    <property type="project" value="UniProtKB-KW"/>
</dbReference>
<dbReference type="GO" id="GO:0050567">
    <property type="term" value="F:glutaminyl-tRNA synthase (glutamine-hydrolyzing) activity"/>
    <property type="evidence" value="ECO:0007669"/>
    <property type="project" value="UniProtKB-UniRule"/>
</dbReference>
<dbReference type="GO" id="GO:0070681">
    <property type="term" value="P:glutaminyl-tRNAGln biosynthesis via transamidation"/>
    <property type="evidence" value="ECO:0007669"/>
    <property type="project" value="TreeGrafter"/>
</dbReference>
<dbReference type="GO" id="GO:0006412">
    <property type="term" value="P:translation"/>
    <property type="evidence" value="ECO:0007669"/>
    <property type="project" value="UniProtKB-UniRule"/>
</dbReference>
<dbReference type="FunFam" id="1.10.10.410:FF:000003">
    <property type="entry name" value="Glutamyl-tRNA(Gln) amidotransferase subunit E"/>
    <property type="match status" value="1"/>
</dbReference>
<dbReference type="FunFam" id="1.10.150.380:FF:000002">
    <property type="entry name" value="Glutamyl-tRNA(Gln) amidotransferase subunit E"/>
    <property type="match status" value="1"/>
</dbReference>
<dbReference type="FunFam" id="3.30.1360.30:FF:000003">
    <property type="entry name" value="Glutamyl-tRNA(Gln) amidotransferase subunit E"/>
    <property type="match status" value="1"/>
</dbReference>
<dbReference type="Gene3D" id="1.10.10.410">
    <property type="match status" value="1"/>
</dbReference>
<dbReference type="Gene3D" id="3.30.1360.30">
    <property type="entry name" value="GAD-like domain"/>
    <property type="match status" value="1"/>
</dbReference>
<dbReference type="Gene3D" id="1.10.150.380">
    <property type="entry name" value="GatB domain, N-terminal subdomain"/>
    <property type="match status" value="1"/>
</dbReference>
<dbReference type="HAMAP" id="MF_00588">
    <property type="entry name" value="GatE"/>
    <property type="match status" value="1"/>
</dbReference>
<dbReference type="InterPro" id="IPR017959">
    <property type="entry name" value="Asn/Gln-tRNA_amidoTrfase_suB/E"/>
</dbReference>
<dbReference type="InterPro" id="IPR006075">
    <property type="entry name" value="Asn/Gln-tRNA_Trfase_suB/E_cat"/>
</dbReference>
<dbReference type="InterPro" id="IPR018027">
    <property type="entry name" value="Asn/Gln_amidotransferase"/>
</dbReference>
<dbReference type="InterPro" id="IPR003789">
    <property type="entry name" value="Asn/Gln_tRNA_amidoTrase-B-like"/>
</dbReference>
<dbReference type="InterPro" id="IPR004115">
    <property type="entry name" value="GAD-like_sf"/>
</dbReference>
<dbReference type="InterPro" id="IPR029351">
    <property type="entry name" value="GAD_dom"/>
</dbReference>
<dbReference type="InterPro" id="IPR042114">
    <property type="entry name" value="GatB_C_1"/>
</dbReference>
<dbReference type="InterPro" id="IPR023168">
    <property type="entry name" value="GatB_Yqey_C_2"/>
</dbReference>
<dbReference type="InterPro" id="IPR004414">
    <property type="entry name" value="GatE"/>
</dbReference>
<dbReference type="InterPro" id="IPR017958">
    <property type="entry name" value="Gln-tRNA_amidoTrfase_suB_CS"/>
</dbReference>
<dbReference type="InterPro" id="IPR014746">
    <property type="entry name" value="Gln_synth/guanido_kin_cat_dom"/>
</dbReference>
<dbReference type="NCBIfam" id="TIGR00134">
    <property type="entry name" value="gatE_arch"/>
    <property type="match status" value="1"/>
</dbReference>
<dbReference type="NCBIfam" id="NF003107">
    <property type="entry name" value="PRK04028.1"/>
    <property type="match status" value="1"/>
</dbReference>
<dbReference type="PANTHER" id="PTHR11659">
    <property type="entry name" value="GLUTAMYL-TRNA GLN AMIDOTRANSFERASE SUBUNIT B MITOCHONDRIAL AND PROKARYOTIC PET112-RELATED"/>
    <property type="match status" value="1"/>
</dbReference>
<dbReference type="PANTHER" id="PTHR11659:SF2">
    <property type="entry name" value="GLUTAMYL-TRNA(GLN) AMIDOTRANSFERASE SUBUNIT E"/>
    <property type="match status" value="1"/>
</dbReference>
<dbReference type="Pfam" id="PF02938">
    <property type="entry name" value="GAD"/>
    <property type="match status" value="1"/>
</dbReference>
<dbReference type="Pfam" id="PF02934">
    <property type="entry name" value="GatB_N"/>
    <property type="match status" value="1"/>
</dbReference>
<dbReference type="Pfam" id="PF02637">
    <property type="entry name" value="GatB_Yqey"/>
    <property type="match status" value="1"/>
</dbReference>
<dbReference type="SMART" id="SM00845">
    <property type="entry name" value="GatB_Yqey"/>
    <property type="match status" value="1"/>
</dbReference>
<dbReference type="SUPFAM" id="SSF55261">
    <property type="entry name" value="GAD domain-like"/>
    <property type="match status" value="1"/>
</dbReference>
<dbReference type="SUPFAM" id="SSF89095">
    <property type="entry name" value="GatB/YqeY motif"/>
    <property type="match status" value="1"/>
</dbReference>
<dbReference type="SUPFAM" id="SSF55931">
    <property type="entry name" value="Glutamine synthetase/guanido kinase"/>
    <property type="match status" value="1"/>
</dbReference>
<dbReference type="PROSITE" id="PS01234">
    <property type="entry name" value="GATB"/>
    <property type="match status" value="1"/>
</dbReference>
<organism>
    <name type="scientific">Thermococcus gammatolerans (strain DSM 15229 / JCM 11827 / EJ3)</name>
    <dbReference type="NCBI Taxonomy" id="593117"/>
    <lineage>
        <taxon>Archaea</taxon>
        <taxon>Methanobacteriati</taxon>
        <taxon>Methanobacteriota</taxon>
        <taxon>Thermococci</taxon>
        <taxon>Thermococcales</taxon>
        <taxon>Thermococcaceae</taxon>
        <taxon>Thermococcus</taxon>
    </lineage>
</organism>
<sequence length="628" mass="71315">MTEKFDYKELGLKVGLEIHRQLDTKKLFSPVPSELTEKVDFTFERRLRPTMSELGEIDPAALEEFKKGRKYIYEGNYELSDLVYMDEEPPRGPDREALEVTLQIAYLLNAKPVDEVHFMRKIVIDGSNVSGFQRTAIIALDGKVDTPWGSVGIPTICLEEDACRIVERKEKEVIYRLDRLGIPLVEISTTPDIHHPEQAKVVAKYIGDALRATRKVKRGLGTIRQDLNVSIKGGARVEIKGVQELDMIPLIIEREVERQLNLLKIRDELRERGVRPEDIKEEFYDVTDVFENTESKIIARTIKKGGNVLAVKLPKFRGLIGREIQPGRRLGTEMADRAKKYVKGIFHIDELPNYGITEKEVNAVIEKLGLGELDAFVLVAADEETAKKALREVIKRAREAIEGVPEETRRALPDGNTQYMRPLPGKARMYPETDIPSIFIPPEEKERIKANLPELPQERVERYVKEYRIDKSLAETLVNDERDELFEELVKKGVKPSLAASILVVVLKGLKKEVPIENITDDHIREAFQLYTEGKIAKEAFEEIFKELALHPEKSAAQVAEEKGLTLLSEEEVERIIDEVVQQNIEVIKAKGMGAMGMIMGRAMAKLRGRADGKLVSTLVRRKIQELS</sequence>
<comment type="function">
    <text evidence="1">Allows the formation of correctly charged Gln-tRNA(Gln) through the transamidation of misacylated Glu-tRNA(Gln) in organisms which lack glutaminyl-tRNA synthetase. The reaction takes place in the presence of glutamine and ATP through an activated gamma-phospho-Glu-tRNA(Gln). The GatDE system is specific for glutamate and does not act on aspartate.</text>
</comment>
<comment type="catalytic activity">
    <reaction evidence="1">
        <text>L-glutamyl-tRNA(Gln) + L-glutamine + ATP + H2O = L-glutaminyl-tRNA(Gln) + L-glutamate + ADP + phosphate + H(+)</text>
        <dbReference type="Rhea" id="RHEA:17521"/>
        <dbReference type="Rhea" id="RHEA-COMP:9681"/>
        <dbReference type="Rhea" id="RHEA-COMP:9684"/>
        <dbReference type="ChEBI" id="CHEBI:15377"/>
        <dbReference type="ChEBI" id="CHEBI:15378"/>
        <dbReference type="ChEBI" id="CHEBI:29985"/>
        <dbReference type="ChEBI" id="CHEBI:30616"/>
        <dbReference type="ChEBI" id="CHEBI:43474"/>
        <dbReference type="ChEBI" id="CHEBI:58359"/>
        <dbReference type="ChEBI" id="CHEBI:78520"/>
        <dbReference type="ChEBI" id="CHEBI:78521"/>
        <dbReference type="ChEBI" id="CHEBI:456216"/>
    </reaction>
</comment>
<comment type="subunit">
    <text evidence="1">Heterodimer of GatD and GatE.</text>
</comment>
<comment type="similarity">
    <text evidence="1">Belongs to the GatB/GatE family. GatE subfamily.</text>
</comment>
<accession>C5A5B0</accession>